<reference key="1">
    <citation type="submission" date="2005-10" db="EMBL/GenBank/DDBJ databases">
        <title>Complete sequence of Pelobacter carbinolicus DSM 2380.</title>
        <authorList>
            <person name="Copeland A."/>
            <person name="Lucas S."/>
            <person name="Lapidus A."/>
            <person name="Barry K."/>
            <person name="Detter J.C."/>
            <person name="Glavina T."/>
            <person name="Hammon N."/>
            <person name="Israni S."/>
            <person name="Pitluck S."/>
            <person name="Chertkov O."/>
            <person name="Schmutz J."/>
            <person name="Larimer F."/>
            <person name="Land M."/>
            <person name="Kyrpides N."/>
            <person name="Ivanova N."/>
            <person name="Richardson P."/>
        </authorList>
    </citation>
    <scope>NUCLEOTIDE SEQUENCE [LARGE SCALE GENOMIC DNA]</scope>
    <source>
        <strain>DSM 2380 / NBRC 103641 / GraBd1</strain>
    </source>
</reference>
<sequence length="69" mass="7930">MIRKFLIVLIIAYQRYISPFTAPSCRFYPSCSEYARQSLIKYGLIKGVVKTCGRLCRCHPFHPGGYDPV</sequence>
<gene>
    <name type="ordered locus">Pcar_3144</name>
</gene>
<evidence type="ECO:0000255" key="1">
    <source>
        <dbReference type="HAMAP-Rule" id="MF_00386"/>
    </source>
</evidence>
<comment type="function">
    <text evidence="1">Could be involved in insertion of integral membrane proteins into the membrane.</text>
</comment>
<comment type="subcellular location">
    <subcellularLocation>
        <location evidence="1">Cell inner membrane</location>
        <topology evidence="1">Peripheral membrane protein</topology>
        <orientation evidence="1">Cytoplasmic side</orientation>
    </subcellularLocation>
</comment>
<comment type="similarity">
    <text evidence="1">Belongs to the UPF0161 family.</text>
</comment>
<name>YIDD_SYNC1</name>
<proteinExistence type="inferred from homology"/>
<feature type="chain" id="PRO_0000253138" description="Putative membrane protein insertion efficiency factor">
    <location>
        <begin position="1"/>
        <end position="69"/>
    </location>
</feature>
<keyword id="KW-0997">Cell inner membrane</keyword>
<keyword id="KW-1003">Cell membrane</keyword>
<keyword id="KW-0472">Membrane</keyword>
<keyword id="KW-1185">Reference proteome</keyword>
<organism>
    <name type="scientific">Syntrophotalea carbinolica (strain DSM 2380 / NBRC 103641 / GraBd1)</name>
    <name type="common">Pelobacter carbinolicus</name>
    <dbReference type="NCBI Taxonomy" id="338963"/>
    <lineage>
        <taxon>Bacteria</taxon>
        <taxon>Pseudomonadati</taxon>
        <taxon>Thermodesulfobacteriota</taxon>
        <taxon>Desulfuromonadia</taxon>
        <taxon>Desulfuromonadales</taxon>
        <taxon>Syntrophotaleaceae</taxon>
        <taxon>Syntrophotalea</taxon>
    </lineage>
</organism>
<accession>Q39ZS8</accession>
<protein>
    <recommendedName>
        <fullName evidence="1">Putative membrane protein insertion efficiency factor</fullName>
    </recommendedName>
</protein>
<dbReference type="EMBL" id="CP000142">
    <property type="protein sequence ID" value="ABA90379.1"/>
    <property type="molecule type" value="Genomic_DNA"/>
</dbReference>
<dbReference type="RefSeq" id="WP_011342935.1">
    <property type="nucleotide sequence ID" value="NC_007498.2"/>
</dbReference>
<dbReference type="STRING" id="338963.Pcar_3144"/>
<dbReference type="KEGG" id="pca:Pcar_3144"/>
<dbReference type="eggNOG" id="COG0759">
    <property type="taxonomic scope" value="Bacteria"/>
</dbReference>
<dbReference type="HOGENOM" id="CLU_144811_6_0_7"/>
<dbReference type="OrthoDB" id="9801753at2"/>
<dbReference type="Proteomes" id="UP000002534">
    <property type="component" value="Chromosome"/>
</dbReference>
<dbReference type="GO" id="GO:0005886">
    <property type="term" value="C:plasma membrane"/>
    <property type="evidence" value="ECO:0007669"/>
    <property type="project" value="UniProtKB-SubCell"/>
</dbReference>
<dbReference type="HAMAP" id="MF_00386">
    <property type="entry name" value="UPF0161_YidD"/>
    <property type="match status" value="1"/>
</dbReference>
<dbReference type="InterPro" id="IPR002696">
    <property type="entry name" value="Membr_insert_effic_factor_YidD"/>
</dbReference>
<dbReference type="NCBIfam" id="TIGR00278">
    <property type="entry name" value="membrane protein insertion efficiency factor YidD"/>
    <property type="match status" value="1"/>
</dbReference>
<dbReference type="PANTHER" id="PTHR33383">
    <property type="entry name" value="MEMBRANE PROTEIN INSERTION EFFICIENCY FACTOR-RELATED"/>
    <property type="match status" value="1"/>
</dbReference>
<dbReference type="PANTHER" id="PTHR33383:SF1">
    <property type="entry name" value="MEMBRANE PROTEIN INSERTION EFFICIENCY FACTOR-RELATED"/>
    <property type="match status" value="1"/>
</dbReference>
<dbReference type="Pfam" id="PF01809">
    <property type="entry name" value="YidD"/>
    <property type="match status" value="1"/>
</dbReference>
<dbReference type="SMART" id="SM01234">
    <property type="entry name" value="Haemolytic"/>
    <property type="match status" value="1"/>
</dbReference>